<evidence type="ECO:0000255" key="1">
    <source>
        <dbReference type="HAMAP-Rule" id="MF_01431"/>
    </source>
</evidence>
<accession>Q0T6R1</accession>
<organism>
    <name type="scientific">Shigella flexneri serotype 5b (strain 8401)</name>
    <dbReference type="NCBI Taxonomy" id="373384"/>
    <lineage>
        <taxon>Bacteria</taxon>
        <taxon>Pseudomonadati</taxon>
        <taxon>Pseudomonadota</taxon>
        <taxon>Gammaproteobacteria</taxon>
        <taxon>Enterobacterales</taxon>
        <taxon>Enterobacteriaceae</taxon>
        <taxon>Shigella</taxon>
    </lineage>
</organism>
<dbReference type="EC" id="3.2.-.-" evidence="1"/>
<dbReference type="EMBL" id="CP000266">
    <property type="protein sequence ID" value="ABF02915.1"/>
    <property type="molecule type" value="Genomic_DNA"/>
</dbReference>
<dbReference type="RefSeq" id="WP_001207526.1">
    <property type="nucleotide sequence ID" value="NC_008258.1"/>
</dbReference>
<dbReference type="SMR" id="Q0T6R1"/>
<dbReference type="KEGG" id="sfv:SFV_0675"/>
<dbReference type="HOGENOM" id="CLU_036838_2_0_6"/>
<dbReference type="Proteomes" id="UP000000659">
    <property type="component" value="Chromosome"/>
</dbReference>
<dbReference type="GO" id="GO:0005829">
    <property type="term" value="C:cytosol"/>
    <property type="evidence" value="ECO:0007669"/>
    <property type="project" value="TreeGrafter"/>
</dbReference>
<dbReference type="GO" id="GO:0008477">
    <property type="term" value="F:purine nucleosidase activity"/>
    <property type="evidence" value="ECO:0007669"/>
    <property type="project" value="TreeGrafter"/>
</dbReference>
<dbReference type="GO" id="GO:0045437">
    <property type="term" value="F:uridine nucleosidase activity"/>
    <property type="evidence" value="ECO:0007669"/>
    <property type="project" value="InterPro"/>
</dbReference>
<dbReference type="GO" id="GO:0015949">
    <property type="term" value="P:nucleobase-containing small molecule interconversion"/>
    <property type="evidence" value="ECO:0007669"/>
    <property type="project" value="InterPro"/>
</dbReference>
<dbReference type="GO" id="GO:0006152">
    <property type="term" value="P:purine nucleoside catabolic process"/>
    <property type="evidence" value="ECO:0007669"/>
    <property type="project" value="TreeGrafter"/>
</dbReference>
<dbReference type="GO" id="GO:0006206">
    <property type="term" value="P:pyrimidine nucleobase metabolic process"/>
    <property type="evidence" value="ECO:0007669"/>
    <property type="project" value="UniProtKB-UniRule"/>
</dbReference>
<dbReference type="CDD" id="cd02651">
    <property type="entry name" value="nuc_hydro_IU_UC_XIUA"/>
    <property type="match status" value="1"/>
</dbReference>
<dbReference type="FunFam" id="3.90.245.10:FF:000001">
    <property type="entry name" value="Pyrimidine-specific ribonucleoside hydrolase RihA"/>
    <property type="match status" value="1"/>
</dbReference>
<dbReference type="Gene3D" id="3.90.245.10">
    <property type="entry name" value="Ribonucleoside hydrolase-like"/>
    <property type="match status" value="1"/>
</dbReference>
<dbReference type="HAMAP" id="MF_01431">
    <property type="entry name" value="Pyrim_hydro_RihA"/>
    <property type="match status" value="1"/>
</dbReference>
<dbReference type="InterPro" id="IPR015910">
    <property type="entry name" value="I/U_nuclsd_hydro_CS"/>
</dbReference>
<dbReference type="InterPro" id="IPR001910">
    <property type="entry name" value="Inosine/uridine_hydrolase_dom"/>
</dbReference>
<dbReference type="InterPro" id="IPR023186">
    <property type="entry name" value="IUNH"/>
</dbReference>
<dbReference type="InterPro" id="IPR022975">
    <property type="entry name" value="Pyrim_hydro_RihA"/>
</dbReference>
<dbReference type="InterPro" id="IPR036452">
    <property type="entry name" value="Ribo_hydro-like"/>
</dbReference>
<dbReference type="NCBIfam" id="NF007761">
    <property type="entry name" value="PRK10443.1"/>
    <property type="match status" value="1"/>
</dbReference>
<dbReference type="PANTHER" id="PTHR12304">
    <property type="entry name" value="INOSINE-URIDINE PREFERRING NUCLEOSIDE HYDROLASE"/>
    <property type="match status" value="1"/>
</dbReference>
<dbReference type="PANTHER" id="PTHR12304:SF4">
    <property type="entry name" value="URIDINE NUCLEOSIDASE"/>
    <property type="match status" value="1"/>
</dbReference>
<dbReference type="Pfam" id="PF01156">
    <property type="entry name" value="IU_nuc_hydro"/>
    <property type="match status" value="1"/>
</dbReference>
<dbReference type="SUPFAM" id="SSF53590">
    <property type="entry name" value="Nucleoside hydrolase"/>
    <property type="match status" value="1"/>
</dbReference>
<dbReference type="PROSITE" id="PS01247">
    <property type="entry name" value="IUNH"/>
    <property type="match status" value="1"/>
</dbReference>
<feature type="chain" id="PRO_1000024403" description="Pyrimidine-specific ribonucleoside hydrolase RihA">
    <location>
        <begin position="1"/>
        <end position="311"/>
    </location>
</feature>
<feature type="active site" evidence="1">
    <location>
        <position position="240"/>
    </location>
</feature>
<keyword id="KW-0326">Glycosidase</keyword>
<keyword id="KW-0378">Hydrolase</keyword>
<proteinExistence type="inferred from homology"/>
<reference key="1">
    <citation type="journal article" date="2006" name="BMC Genomics">
        <title>Complete genome sequence of Shigella flexneri 5b and comparison with Shigella flexneri 2a.</title>
        <authorList>
            <person name="Nie H."/>
            <person name="Yang F."/>
            <person name="Zhang X."/>
            <person name="Yang J."/>
            <person name="Chen L."/>
            <person name="Wang J."/>
            <person name="Xiong Z."/>
            <person name="Peng J."/>
            <person name="Sun L."/>
            <person name="Dong J."/>
            <person name="Xue Y."/>
            <person name="Xu X."/>
            <person name="Chen S."/>
            <person name="Yao Z."/>
            <person name="Shen Y."/>
            <person name="Jin Q."/>
        </authorList>
    </citation>
    <scope>NUCLEOTIDE SEQUENCE [LARGE SCALE GENOMIC DNA]</scope>
    <source>
        <strain>8401</strain>
    </source>
</reference>
<comment type="function">
    <text evidence="1">Hydrolyzes cytidine or uridine to ribose and cytosine or uracil, respectively.</text>
</comment>
<comment type="similarity">
    <text evidence="1">Belongs to the IUNH family. RihA subfamily.</text>
</comment>
<gene>
    <name evidence="1" type="primary">rihA</name>
    <name type="ordered locus">SFV_0675</name>
</gene>
<name>RIHA_SHIF8</name>
<sequence>MALPILLDCDPGHDDAIAIVLALASPELDVKAITSSAGNQTPEKTLRNVLRMLTLLNRTDIPVAGGAVKPLMRELIIADNVHGESGLDGPALPEPTFAPQNCTAVELMAKTLRESAEPVTIVSTGPQTNVALLLNSHPELHSKIARIVIMGGAMGLGNWTPAAEFNIYVDPEAAEIVFQSGIPVVMAGLDVTHKAQIHVEDTERFRAIGNPVSTIVAELLDFFLEYHKDEKWGFVGAPLHDPCTIAWLLKPELFTTVERWVGVETQGKYTQGMTVVDYYYLTGNKPNATVIVDVDRQGFVDLLADRLKFYA</sequence>
<protein>
    <recommendedName>
        <fullName evidence="1">Pyrimidine-specific ribonucleoside hydrolase RihA</fullName>
        <ecNumber evidence="1">3.2.-.-</ecNumber>
    </recommendedName>
    <alternativeName>
        <fullName evidence="1">Cytidine/uridine-specific hydrolase</fullName>
    </alternativeName>
</protein>